<evidence type="ECO:0000255" key="1">
    <source>
        <dbReference type="HAMAP-Rule" id="MF_01341"/>
    </source>
</evidence>
<evidence type="ECO:0000256" key="2">
    <source>
        <dbReference type="SAM" id="MobiDB-lite"/>
    </source>
</evidence>
<evidence type="ECO:0000305" key="3"/>
<feature type="chain" id="PRO_1000054543" description="Large ribosomal subunit protein uL15">
    <location>
        <begin position="1"/>
        <end position="144"/>
    </location>
</feature>
<feature type="region of interest" description="Disordered" evidence="2">
    <location>
        <begin position="1"/>
        <end position="54"/>
    </location>
</feature>
<feature type="compositionally biased region" description="Gly residues" evidence="2">
    <location>
        <begin position="21"/>
        <end position="31"/>
    </location>
</feature>
<feature type="compositionally biased region" description="Gly residues" evidence="2">
    <location>
        <begin position="42"/>
        <end position="52"/>
    </location>
</feature>
<dbReference type="EMBL" id="CP000444">
    <property type="protein sequence ID" value="ABI41219.1"/>
    <property type="molecule type" value="Genomic_DNA"/>
</dbReference>
<dbReference type="SMR" id="Q0I086"/>
<dbReference type="KEGG" id="shm:Shewmr7_0213"/>
<dbReference type="HOGENOM" id="CLU_055188_4_2_6"/>
<dbReference type="GO" id="GO:0022625">
    <property type="term" value="C:cytosolic large ribosomal subunit"/>
    <property type="evidence" value="ECO:0007669"/>
    <property type="project" value="TreeGrafter"/>
</dbReference>
<dbReference type="GO" id="GO:0019843">
    <property type="term" value="F:rRNA binding"/>
    <property type="evidence" value="ECO:0007669"/>
    <property type="project" value="UniProtKB-UniRule"/>
</dbReference>
<dbReference type="GO" id="GO:0003735">
    <property type="term" value="F:structural constituent of ribosome"/>
    <property type="evidence" value="ECO:0007669"/>
    <property type="project" value="InterPro"/>
</dbReference>
<dbReference type="GO" id="GO:0006412">
    <property type="term" value="P:translation"/>
    <property type="evidence" value="ECO:0007669"/>
    <property type="project" value="UniProtKB-UniRule"/>
</dbReference>
<dbReference type="FunFam" id="3.100.10.10:FF:000003">
    <property type="entry name" value="50S ribosomal protein L15"/>
    <property type="match status" value="1"/>
</dbReference>
<dbReference type="Gene3D" id="3.100.10.10">
    <property type="match status" value="1"/>
</dbReference>
<dbReference type="HAMAP" id="MF_01341">
    <property type="entry name" value="Ribosomal_uL15"/>
    <property type="match status" value="1"/>
</dbReference>
<dbReference type="InterPro" id="IPR030878">
    <property type="entry name" value="Ribosomal_uL15"/>
</dbReference>
<dbReference type="InterPro" id="IPR021131">
    <property type="entry name" value="Ribosomal_uL15/eL18"/>
</dbReference>
<dbReference type="InterPro" id="IPR036227">
    <property type="entry name" value="Ribosomal_uL15/eL18_sf"/>
</dbReference>
<dbReference type="InterPro" id="IPR005749">
    <property type="entry name" value="Ribosomal_uL15_bac-type"/>
</dbReference>
<dbReference type="InterPro" id="IPR001196">
    <property type="entry name" value="Ribosomal_uL15_CS"/>
</dbReference>
<dbReference type="NCBIfam" id="TIGR01071">
    <property type="entry name" value="rplO_bact"/>
    <property type="match status" value="1"/>
</dbReference>
<dbReference type="PANTHER" id="PTHR12934">
    <property type="entry name" value="50S RIBOSOMAL PROTEIN L15"/>
    <property type="match status" value="1"/>
</dbReference>
<dbReference type="PANTHER" id="PTHR12934:SF11">
    <property type="entry name" value="LARGE RIBOSOMAL SUBUNIT PROTEIN UL15M"/>
    <property type="match status" value="1"/>
</dbReference>
<dbReference type="Pfam" id="PF00828">
    <property type="entry name" value="Ribosomal_L27A"/>
    <property type="match status" value="1"/>
</dbReference>
<dbReference type="SUPFAM" id="SSF52080">
    <property type="entry name" value="Ribosomal proteins L15p and L18e"/>
    <property type="match status" value="1"/>
</dbReference>
<dbReference type="PROSITE" id="PS00475">
    <property type="entry name" value="RIBOSOMAL_L15"/>
    <property type="match status" value="1"/>
</dbReference>
<sequence>MRLNTLSPAAGAKHAPKRVGRGMGSGLGKTAGRGHKGQKSRSGGGVRPGFEGGQMPLKIRLPKFGFTSRRAMVTAEVRVLELAKVNGDVIDLNALKDANVITRNIQFAKIVLSGTIERPVTVKGLKVTKGARAAIEAAGGKIEE</sequence>
<accession>Q0I086</accession>
<comment type="function">
    <text evidence="1">Binds to the 23S rRNA.</text>
</comment>
<comment type="subunit">
    <text evidence="1">Part of the 50S ribosomal subunit.</text>
</comment>
<comment type="similarity">
    <text evidence="1">Belongs to the universal ribosomal protein uL15 family.</text>
</comment>
<proteinExistence type="inferred from homology"/>
<keyword id="KW-0687">Ribonucleoprotein</keyword>
<keyword id="KW-0689">Ribosomal protein</keyword>
<keyword id="KW-0694">RNA-binding</keyword>
<keyword id="KW-0699">rRNA-binding</keyword>
<organism>
    <name type="scientific">Shewanella sp. (strain MR-7)</name>
    <dbReference type="NCBI Taxonomy" id="60481"/>
    <lineage>
        <taxon>Bacteria</taxon>
        <taxon>Pseudomonadati</taxon>
        <taxon>Pseudomonadota</taxon>
        <taxon>Gammaproteobacteria</taxon>
        <taxon>Alteromonadales</taxon>
        <taxon>Shewanellaceae</taxon>
        <taxon>Shewanella</taxon>
    </lineage>
</organism>
<reference key="1">
    <citation type="submission" date="2006-08" db="EMBL/GenBank/DDBJ databases">
        <title>Complete sequence of chromosome 1 of Shewanella sp. MR-7.</title>
        <authorList>
            <person name="Copeland A."/>
            <person name="Lucas S."/>
            <person name="Lapidus A."/>
            <person name="Barry K."/>
            <person name="Detter J.C."/>
            <person name="Glavina del Rio T."/>
            <person name="Hammon N."/>
            <person name="Israni S."/>
            <person name="Dalin E."/>
            <person name="Tice H."/>
            <person name="Pitluck S."/>
            <person name="Kiss H."/>
            <person name="Brettin T."/>
            <person name="Bruce D."/>
            <person name="Han C."/>
            <person name="Tapia R."/>
            <person name="Gilna P."/>
            <person name="Schmutz J."/>
            <person name="Larimer F."/>
            <person name="Land M."/>
            <person name="Hauser L."/>
            <person name="Kyrpides N."/>
            <person name="Mikhailova N."/>
            <person name="Nealson K."/>
            <person name="Konstantinidis K."/>
            <person name="Klappenbach J."/>
            <person name="Tiedje J."/>
            <person name="Richardson P."/>
        </authorList>
    </citation>
    <scope>NUCLEOTIDE SEQUENCE [LARGE SCALE GENOMIC DNA]</scope>
    <source>
        <strain>MR-7</strain>
    </source>
</reference>
<protein>
    <recommendedName>
        <fullName evidence="1">Large ribosomal subunit protein uL15</fullName>
    </recommendedName>
    <alternativeName>
        <fullName evidence="3">50S ribosomal protein L15</fullName>
    </alternativeName>
</protein>
<name>RL15_SHESR</name>
<gene>
    <name evidence="1" type="primary">rplO</name>
    <name type="ordered locus">Shewmr7_0213</name>
</gene>